<feature type="chain" id="PRO_0000085555" description="Rusticyanin">
    <location>
        <begin position="1"/>
        <end position="155"/>
    </location>
</feature>
<feature type="domain" description="Plastocyanin-like">
    <location>
        <begin position="53"/>
        <end position="155"/>
    </location>
</feature>
<feature type="binding site">
    <location>
        <position position="85"/>
    </location>
    <ligand>
        <name>Cu cation</name>
        <dbReference type="ChEBI" id="CHEBI:23378"/>
    </ligand>
</feature>
<feature type="binding site">
    <location>
        <position position="138"/>
    </location>
    <ligand>
        <name>Cu cation</name>
        <dbReference type="ChEBI" id="CHEBI:23378"/>
    </ligand>
</feature>
<feature type="binding site">
    <location>
        <position position="143"/>
    </location>
    <ligand>
        <name>Cu cation</name>
        <dbReference type="ChEBI" id="CHEBI:23378"/>
    </ligand>
</feature>
<feature type="binding site">
    <location>
        <position position="148"/>
    </location>
    <ligand>
        <name>Cu cation</name>
        <dbReference type="ChEBI" id="CHEBI:23378"/>
    </ligand>
</feature>
<feature type="sequence conflict" description="In Ref. 1; AA sequence." evidence="1" ref="1">
    <original>G</original>
    <variation>S</variation>
    <location>
        <position position="5"/>
    </location>
</feature>
<feature type="sequence conflict" description="In Ref. 1; AA sequence." evidence="1" ref="1">
    <original>Q</original>
    <variation>E</variation>
    <location>
        <position position="14"/>
    </location>
</feature>
<feature type="sequence conflict" description="In Ref. 1; AA sequence." evidence="1" ref="1">
    <location>
        <position position="37"/>
    </location>
</feature>
<reference key="1">
    <citation type="journal article" date="1991" name="FEBS Lett.">
        <title>The amino acid sequence of rusticyanin isolated from Thiobacillus ferrooxidans.</title>
        <authorList>
            <person name="Yano T."/>
            <person name="Fukumori Y."/>
            <person name="Yamanaka T."/>
        </authorList>
    </citation>
    <scope>PROTEIN SEQUENCE</scope>
</reference>
<reference key="2">
    <citation type="journal article" date="1993" name="Biochim. Biophys. Acta">
        <title>Amino-acid sequence of rusticyanin from Thiobacillus ferrooxidans and its comparison with other blue copper proteins.</title>
        <authorList>
            <person name="Nunzi F."/>
            <person name="Woudstra M."/>
            <person name="Campese D."/>
            <person name="Bonicel J."/>
            <person name="Morin D."/>
            <person name="Bruschi M."/>
        </authorList>
    </citation>
    <scope>PROTEIN SEQUENCE</scope>
</reference>
<gene>
    <name type="primary">rus</name>
</gene>
<accession>P23742</accession>
<accession>P31372</accession>
<keyword id="KW-0186">Copper</keyword>
<keyword id="KW-0903">Direct protein sequencing</keyword>
<keyword id="KW-0249">Electron transport</keyword>
<keyword id="KW-0479">Metal-binding</keyword>
<keyword id="KW-0574">Periplasm</keyword>
<keyword id="KW-0813">Transport</keyword>
<comment type="function">
    <text>Electron carrier from cytochrome c552 to the A-type oxidase.</text>
</comment>
<comment type="cofactor">
    <cofactor>
        <name>Cu cation</name>
        <dbReference type="ChEBI" id="CHEBI:23378"/>
    </cofactor>
    <text>Binds 1 copper ion per subunit.</text>
</comment>
<comment type="biophysicochemical properties">
    <redoxPotential>
        <text>E(0) is +680 mV.</text>
    </redoxPotential>
</comment>
<comment type="subunit">
    <text>Monomer.</text>
</comment>
<comment type="subcellular location">
    <subcellularLocation>
        <location>Periplasm</location>
    </subcellularLocation>
</comment>
<comment type="caution">
    <text evidence="1">The two different versions of rusticyanins are most probably due to strain variations.</text>
</comment>
<organism>
    <name type="scientific">Acidithiobacillus ferrooxidans</name>
    <name type="common">Thiobacillus ferrooxidans</name>
    <dbReference type="NCBI Taxonomy" id="920"/>
    <lineage>
        <taxon>Bacteria</taxon>
        <taxon>Pseudomonadati</taxon>
        <taxon>Pseudomonadota</taxon>
        <taxon>Acidithiobacillia</taxon>
        <taxon>Acidithiobacillales</taxon>
        <taxon>Acidithiobacillaceae</taxon>
        <taxon>Acidithiobacillus</taxon>
    </lineage>
</organism>
<dbReference type="PIR" id="S17149">
    <property type="entry name" value="S17149"/>
</dbReference>
<dbReference type="PIR" id="S29825">
    <property type="entry name" value="S29825"/>
</dbReference>
<dbReference type="SMR" id="P23742"/>
<dbReference type="GO" id="GO:0042597">
    <property type="term" value="C:periplasmic space"/>
    <property type="evidence" value="ECO:0007669"/>
    <property type="project" value="UniProtKB-SubCell"/>
</dbReference>
<dbReference type="GO" id="GO:0005507">
    <property type="term" value="F:copper ion binding"/>
    <property type="evidence" value="ECO:0007669"/>
    <property type="project" value="InterPro"/>
</dbReference>
<dbReference type="GO" id="GO:0009055">
    <property type="term" value="F:electron transfer activity"/>
    <property type="evidence" value="ECO:0007669"/>
    <property type="project" value="InterPro"/>
</dbReference>
<dbReference type="CDD" id="cd04231">
    <property type="entry name" value="Rusticyanin"/>
    <property type="match status" value="1"/>
</dbReference>
<dbReference type="Gene3D" id="2.60.40.420">
    <property type="entry name" value="Cupredoxins - blue copper proteins"/>
    <property type="match status" value="1"/>
</dbReference>
<dbReference type="InterPro" id="IPR000923">
    <property type="entry name" value="BlueCu_1"/>
</dbReference>
<dbReference type="InterPro" id="IPR028871">
    <property type="entry name" value="BlueCu_1_BS"/>
</dbReference>
<dbReference type="InterPro" id="IPR033138">
    <property type="entry name" value="Cu_oxidase_CS"/>
</dbReference>
<dbReference type="InterPro" id="IPR008972">
    <property type="entry name" value="Cupredoxin"/>
</dbReference>
<dbReference type="InterPro" id="IPR001243">
    <property type="entry name" value="Rusticyanin"/>
</dbReference>
<dbReference type="NCBIfam" id="TIGR03095">
    <property type="entry name" value="rusti_cyanin"/>
    <property type="match status" value="1"/>
</dbReference>
<dbReference type="Pfam" id="PF00127">
    <property type="entry name" value="Copper-bind"/>
    <property type="match status" value="1"/>
</dbReference>
<dbReference type="PRINTS" id="PR00158">
    <property type="entry name" value="RUSTICYANIN"/>
</dbReference>
<dbReference type="SUPFAM" id="SSF49503">
    <property type="entry name" value="Cupredoxins"/>
    <property type="match status" value="1"/>
</dbReference>
<dbReference type="PROSITE" id="PS00196">
    <property type="entry name" value="COPPER_BLUE"/>
    <property type="match status" value="1"/>
</dbReference>
<dbReference type="PROSITE" id="PS00079">
    <property type="entry name" value="MULTICOPPER_OXIDASE1"/>
    <property type="match status" value="1"/>
</dbReference>
<name>RUS1_ACIFR</name>
<sequence length="155" mass="16446">GALDGSWKEATLPQVKAMLQKDTGKASGDTVTYSGKTVHVVAAAVLPGFPFPSFEVHDKKNPTLDIPAGATVDVTFINTNKGFGHSFDITKKGPPFAVMPNIKPIVAGTGFSPVPKDGKFGYSEFTWHPTAGTYYYVCQIPGHAATGMFGKIIVK</sequence>
<evidence type="ECO:0000305" key="1"/>
<proteinExistence type="evidence at protein level"/>
<protein>
    <recommendedName>
        <fullName>Rusticyanin</fullName>
    </recommendedName>
</protein>